<reference key="1">
    <citation type="journal article" date="2005" name="Science">
        <title>The transcriptional landscape of the mammalian genome.</title>
        <authorList>
            <person name="Carninci P."/>
            <person name="Kasukawa T."/>
            <person name="Katayama S."/>
            <person name="Gough J."/>
            <person name="Frith M.C."/>
            <person name="Maeda N."/>
            <person name="Oyama R."/>
            <person name="Ravasi T."/>
            <person name="Lenhard B."/>
            <person name="Wells C."/>
            <person name="Kodzius R."/>
            <person name="Shimokawa K."/>
            <person name="Bajic V.B."/>
            <person name="Brenner S.E."/>
            <person name="Batalov S."/>
            <person name="Forrest A.R."/>
            <person name="Zavolan M."/>
            <person name="Davis M.J."/>
            <person name="Wilming L.G."/>
            <person name="Aidinis V."/>
            <person name="Allen J.E."/>
            <person name="Ambesi-Impiombato A."/>
            <person name="Apweiler R."/>
            <person name="Aturaliya R.N."/>
            <person name="Bailey T.L."/>
            <person name="Bansal M."/>
            <person name="Baxter L."/>
            <person name="Beisel K.W."/>
            <person name="Bersano T."/>
            <person name="Bono H."/>
            <person name="Chalk A.M."/>
            <person name="Chiu K.P."/>
            <person name="Choudhary V."/>
            <person name="Christoffels A."/>
            <person name="Clutterbuck D.R."/>
            <person name="Crowe M.L."/>
            <person name="Dalla E."/>
            <person name="Dalrymple B.P."/>
            <person name="de Bono B."/>
            <person name="Della Gatta G."/>
            <person name="di Bernardo D."/>
            <person name="Down T."/>
            <person name="Engstrom P."/>
            <person name="Fagiolini M."/>
            <person name="Faulkner G."/>
            <person name="Fletcher C.F."/>
            <person name="Fukushima T."/>
            <person name="Furuno M."/>
            <person name="Futaki S."/>
            <person name="Gariboldi M."/>
            <person name="Georgii-Hemming P."/>
            <person name="Gingeras T.R."/>
            <person name="Gojobori T."/>
            <person name="Green R.E."/>
            <person name="Gustincich S."/>
            <person name="Harbers M."/>
            <person name="Hayashi Y."/>
            <person name="Hensch T.K."/>
            <person name="Hirokawa N."/>
            <person name="Hill D."/>
            <person name="Huminiecki L."/>
            <person name="Iacono M."/>
            <person name="Ikeo K."/>
            <person name="Iwama A."/>
            <person name="Ishikawa T."/>
            <person name="Jakt M."/>
            <person name="Kanapin A."/>
            <person name="Katoh M."/>
            <person name="Kawasawa Y."/>
            <person name="Kelso J."/>
            <person name="Kitamura H."/>
            <person name="Kitano H."/>
            <person name="Kollias G."/>
            <person name="Krishnan S.P."/>
            <person name="Kruger A."/>
            <person name="Kummerfeld S.K."/>
            <person name="Kurochkin I.V."/>
            <person name="Lareau L.F."/>
            <person name="Lazarevic D."/>
            <person name="Lipovich L."/>
            <person name="Liu J."/>
            <person name="Liuni S."/>
            <person name="McWilliam S."/>
            <person name="Madan Babu M."/>
            <person name="Madera M."/>
            <person name="Marchionni L."/>
            <person name="Matsuda H."/>
            <person name="Matsuzawa S."/>
            <person name="Miki H."/>
            <person name="Mignone F."/>
            <person name="Miyake S."/>
            <person name="Morris K."/>
            <person name="Mottagui-Tabar S."/>
            <person name="Mulder N."/>
            <person name="Nakano N."/>
            <person name="Nakauchi H."/>
            <person name="Ng P."/>
            <person name="Nilsson R."/>
            <person name="Nishiguchi S."/>
            <person name="Nishikawa S."/>
            <person name="Nori F."/>
            <person name="Ohara O."/>
            <person name="Okazaki Y."/>
            <person name="Orlando V."/>
            <person name="Pang K.C."/>
            <person name="Pavan W.J."/>
            <person name="Pavesi G."/>
            <person name="Pesole G."/>
            <person name="Petrovsky N."/>
            <person name="Piazza S."/>
            <person name="Reed J."/>
            <person name="Reid J.F."/>
            <person name="Ring B.Z."/>
            <person name="Ringwald M."/>
            <person name="Rost B."/>
            <person name="Ruan Y."/>
            <person name="Salzberg S.L."/>
            <person name="Sandelin A."/>
            <person name="Schneider C."/>
            <person name="Schoenbach C."/>
            <person name="Sekiguchi K."/>
            <person name="Semple C.A."/>
            <person name="Seno S."/>
            <person name="Sessa L."/>
            <person name="Sheng Y."/>
            <person name="Shibata Y."/>
            <person name="Shimada H."/>
            <person name="Shimada K."/>
            <person name="Silva D."/>
            <person name="Sinclair B."/>
            <person name="Sperling S."/>
            <person name="Stupka E."/>
            <person name="Sugiura K."/>
            <person name="Sultana R."/>
            <person name="Takenaka Y."/>
            <person name="Taki K."/>
            <person name="Tammoja K."/>
            <person name="Tan S.L."/>
            <person name="Tang S."/>
            <person name="Taylor M.S."/>
            <person name="Tegner J."/>
            <person name="Teichmann S.A."/>
            <person name="Ueda H.R."/>
            <person name="van Nimwegen E."/>
            <person name="Verardo R."/>
            <person name="Wei C.L."/>
            <person name="Yagi K."/>
            <person name="Yamanishi H."/>
            <person name="Zabarovsky E."/>
            <person name="Zhu S."/>
            <person name="Zimmer A."/>
            <person name="Hide W."/>
            <person name="Bult C."/>
            <person name="Grimmond S.M."/>
            <person name="Teasdale R.D."/>
            <person name="Liu E.T."/>
            <person name="Brusic V."/>
            <person name="Quackenbush J."/>
            <person name="Wahlestedt C."/>
            <person name="Mattick J.S."/>
            <person name="Hume D.A."/>
            <person name="Kai C."/>
            <person name="Sasaki D."/>
            <person name="Tomaru Y."/>
            <person name="Fukuda S."/>
            <person name="Kanamori-Katayama M."/>
            <person name="Suzuki M."/>
            <person name="Aoki J."/>
            <person name="Arakawa T."/>
            <person name="Iida J."/>
            <person name="Imamura K."/>
            <person name="Itoh M."/>
            <person name="Kato T."/>
            <person name="Kawaji H."/>
            <person name="Kawagashira N."/>
            <person name="Kawashima T."/>
            <person name="Kojima M."/>
            <person name="Kondo S."/>
            <person name="Konno H."/>
            <person name="Nakano K."/>
            <person name="Ninomiya N."/>
            <person name="Nishio T."/>
            <person name="Okada M."/>
            <person name="Plessy C."/>
            <person name="Shibata K."/>
            <person name="Shiraki T."/>
            <person name="Suzuki S."/>
            <person name="Tagami M."/>
            <person name="Waki K."/>
            <person name="Watahiki A."/>
            <person name="Okamura-Oho Y."/>
            <person name="Suzuki H."/>
            <person name="Kawai J."/>
            <person name="Hayashizaki Y."/>
        </authorList>
    </citation>
    <scope>NUCLEOTIDE SEQUENCE [LARGE SCALE MRNA]</scope>
    <source>
        <strain>C57BL/6J</strain>
        <strain>NOD</strain>
        <tissue>Diencephalon</tissue>
    </source>
</reference>
<reference key="2">
    <citation type="journal article" date="2004" name="Genome Res.">
        <title>The status, quality, and expansion of the NIH full-length cDNA project: the Mammalian Gene Collection (MGC).</title>
        <authorList>
            <consortium name="The MGC Project Team"/>
        </authorList>
    </citation>
    <scope>NUCLEOTIDE SEQUENCE [LARGE SCALE MRNA]</scope>
    <source>
        <strain>FVB/N</strain>
        <tissue>Mammary tumor</tissue>
    </source>
</reference>
<reference key="3">
    <citation type="journal article" date="2010" name="Cell">
        <title>A tissue-specific atlas of mouse protein phosphorylation and expression.</title>
        <authorList>
            <person name="Huttlin E.L."/>
            <person name="Jedrychowski M.P."/>
            <person name="Elias J.E."/>
            <person name="Goswami T."/>
            <person name="Rad R."/>
            <person name="Beausoleil S.A."/>
            <person name="Villen J."/>
            <person name="Haas W."/>
            <person name="Sowa M.E."/>
            <person name="Gygi S.P."/>
        </authorList>
    </citation>
    <scope>IDENTIFICATION BY MASS SPECTROMETRY [LARGE SCALE ANALYSIS]</scope>
    <source>
        <tissue>Brain</tissue>
        <tissue>Spleen</tissue>
        <tissue>Testis</tissue>
    </source>
</reference>
<organism>
    <name type="scientific">Mus musculus</name>
    <name type="common">Mouse</name>
    <dbReference type="NCBI Taxonomy" id="10090"/>
    <lineage>
        <taxon>Eukaryota</taxon>
        <taxon>Metazoa</taxon>
        <taxon>Chordata</taxon>
        <taxon>Craniata</taxon>
        <taxon>Vertebrata</taxon>
        <taxon>Euteleostomi</taxon>
        <taxon>Mammalia</taxon>
        <taxon>Eutheria</taxon>
        <taxon>Euarchontoglires</taxon>
        <taxon>Glires</taxon>
        <taxon>Rodentia</taxon>
        <taxon>Myomorpha</taxon>
        <taxon>Muroidea</taxon>
        <taxon>Muridae</taxon>
        <taxon>Murinae</taxon>
        <taxon>Mus</taxon>
        <taxon>Mus</taxon>
    </lineage>
</organism>
<name>CTU2_MOUSE</name>
<comment type="function">
    <text evidence="2">Plays a central role in 2-thiolation of mcm(5)S(2)U at tRNA wobble positions of tRNA(Lys), tRNA(Glu) and tRNA(Gln). May act by forming a heterodimer with CTU1/ATPBD3 that ligates sulfur from thiocarboxylated URM1 onto the uridine of tRNAs at wobble position.</text>
</comment>
<comment type="pathway">
    <text evidence="2">tRNA modification; 5-methoxycarbonylmethyl-2-thiouridine-tRNA biosynthesis.</text>
</comment>
<comment type="subunit">
    <text evidence="2">Component of a complex at least composed of URM1, CTU2/NCS2 and CTU1/ATPBD3.</text>
</comment>
<comment type="subcellular location">
    <subcellularLocation>
        <location evidence="2">Cytoplasm</location>
    </subcellularLocation>
</comment>
<comment type="similarity">
    <text evidence="2">Belongs to the CTU2/NCS2 family.</text>
</comment>
<comment type="sequence caution" evidence="4">
    <conflict type="erroneous initiation">
        <sequence resource="EMBL-CDS" id="AAH36332"/>
    </conflict>
</comment>
<comment type="sequence caution" evidence="4">
    <conflict type="frameshift">
        <sequence resource="EMBL-CDS" id="BAC41181"/>
    </conflict>
</comment>
<accession>Q3U308</accession>
<accession>Q8BTG9</accession>
<accession>Q8CI68</accession>
<protein>
    <recommendedName>
        <fullName evidence="2">Cytoplasmic tRNA 2-thiolation protein 2</fullName>
    </recommendedName>
</protein>
<dbReference type="EMBL" id="AK090349">
    <property type="protein sequence ID" value="BAC41181.1"/>
    <property type="status" value="ALT_FRAME"/>
    <property type="molecule type" value="mRNA"/>
</dbReference>
<dbReference type="EMBL" id="AK154995">
    <property type="protein sequence ID" value="BAE32982.1"/>
    <property type="molecule type" value="mRNA"/>
</dbReference>
<dbReference type="EMBL" id="BC036332">
    <property type="protein sequence ID" value="AAH36332.1"/>
    <property type="status" value="ALT_INIT"/>
    <property type="molecule type" value="mRNA"/>
</dbReference>
<dbReference type="CCDS" id="CCDS52694.1"/>
<dbReference type="RefSeq" id="NP_722470.2">
    <property type="nucleotide sequence ID" value="NM_153775.2"/>
</dbReference>
<dbReference type="BioGRID" id="426341">
    <property type="interactions" value="1"/>
</dbReference>
<dbReference type="FunCoup" id="Q3U308">
    <property type="interactions" value="1866"/>
</dbReference>
<dbReference type="STRING" id="10090.ENSMUSP00000112113"/>
<dbReference type="GlyGen" id="Q3U308">
    <property type="glycosylation" value="1 site, 1 O-linked glycan (1 site)"/>
</dbReference>
<dbReference type="iPTMnet" id="Q3U308"/>
<dbReference type="PhosphoSitePlus" id="Q3U308"/>
<dbReference type="SwissPalm" id="Q3U308"/>
<dbReference type="PaxDb" id="10090-ENSMUSP00000112113"/>
<dbReference type="PeptideAtlas" id="Q3U308"/>
<dbReference type="ProteomicsDB" id="285353"/>
<dbReference type="Pumba" id="Q3U308"/>
<dbReference type="Antibodypedia" id="49625">
    <property type="antibodies" value="37 antibodies from 13 providers"/>
</dbReference>
<dbReference type="Ensembl" id="ENSMUST00000116412.8">
    <property type="protein sequence ID" value="ENSMUSP00000112113.2"/>
    <property type="gene ID" value="ENSMUSG00000049482.17"/>
</dbReference>
<dbReference type="GeneID" id="66965"/>
<dbReference type="KEGG" id="mmu:66965"/>
<dbReference type="UCSC" id="uc009nsz.2">
    <property type="organism name" value="mouse"/>
</dbReference>
<dbReference type="AGR" id="MGI:1914215"/>
<dbReference type="CTD" id="348180"/>
<dbReference type="MGI" id="MGI:1914215">
    <property type="gene designation" value="Ctu2"/>
</dbReference>
<dbReference type="VEuPathDB" id="HostDB:ENSMUSG00000049482"/>
<dbReference type="eggNOG" id="KOG2594">
    <property type="taxonomic scope" value="Eukaryota"/>
</dbReference>
<dbReference type="GeneTree" id="ENSGT00390000008797"/>
<dbReference type="InParanoid" id="Q3U308"/>
<dbReference type="OMA" id="KQRKQMM"/>
<dbReference type="OrthoDB" id="25129at2759"/>
<dbReference type="PhylomeDB" id="Q3U308"/>
<dbReference type="TreeFam" id="TF313203"/>
<dbReference type="UniPathway" id="UPA00988"/>
<dbReference type="BioGRID-ORCS" id="66965">
    <property type="hits" value="23 hits in 82 CRISPR screens"/>
</dbReference>
<dbReference type="ChiTaRS" id="Ctu2">
    <property type="organism name" value="mouse"/>
</dbReference>
<dbReference type="PRO" id="PR:Q3U308"/>
<dbReference type="Proteomes" id="UP000000589">
    <property type="component" value="Chromosome 8"/>
</dbReference>
<dbReference type="RNAct" id="Q3U308">
    <property type="molecule type" value="protein"/>
</dbReference>
<dbReference type="Bgee" id="ENSMUSG00000049482">
    <property type="expression patterns" value="Expressed in ear vesicle and 222 other cell types or tissues"/>
</dbReference>
<dbReference type="ExpressionAtlas" id="Q3U308">
    <property type="expression patterns" value="baseline and differential"/>
</dbReference>
<dbReference type="GO" id="GO:0005829">
    <property type="term" value="C:cytosol"/>
    <property type="evidence" value="ECO:0000250"/>
    <property type="project" value="UniProtKB"/>
</dbReference>
<dbReference type="GO" id="GO:0032991">
    <property type="term" value="C:protein-containing complex"/>
    <property type="evidence" value="ECO:0007669"/>
    <property type="project" value="Ensembl"/>
</dbReference>
<dbReference type="GO" id="GO:0016779">
    <property type="term" value="F:nucleotidyltransferase activity"/>
    <property type="evidence" value="ECO:0007669"/>
    <property type="project" value="UniProtKB-UniRule"/>
</dbReference>
<dbReference type="GO" id="GO:0000049">
    <property type="term" value="F:tRNA binding"/>
    <property type="evidence" value="ECO:0007669"/>
    <property type="project" value="InterPro"/>
</dbReference>
<dbReference type="GO" id="GO:0032447">
    <property type="term" value="P:protein urmylation"/>
    <property type="evidence" value="ECO:0007669"/>
    <property type="project" value="UniProtKB-UniRule"/>
</dbReference>
<dbReference type="GO" id="GO:0034227">
    <property type="term" value="P:tRNA thio-modification"/>
    <property type="evidence" value="ECO:0000250"/>
    <property type="project" value="UniProtKB"/>
</dbReference>
<dbReference type="GO" id="GO:0002098">
    <property type="term" value="P:tRNA wobble uridine modification"/>
    <property type="evidence" value="ECO:0000250"/>
    <property type="project" value="UniProtKB"/>
</dbReference>
<dbReference type="Gene3D" id="3.40.50.620">
    <property type="entry name" value="HUPs"/>
    <property type="match status" value="1"/>
</dbReference>
<dbReference type="HAMAP" id="MF_03054">
    <property type="entry name" value="CTU2"/>
    <property type="match status" value="1"/>
</dbReference>
<dbReference type="InterPro" id="IPR019407">
    <property type="entry name" value="CTU2"/>
</dbReference>
<dbReference type="InterPro" id="IPR014729">
    <property type="entry name" value="Rossmann-like_a/b/a_fold"/>
</dbReference>
<dbReference type="PANTHER" id="PTHR20882">
    <property type="entry name" value="CYTOPLASMIC TRNA 2-THIOLATION PROTEIN 2"/>
    <property type="match status" value="1"/>
</dbReference>
<dbReference type="PANTHER" id="PTHR20882:SF14">
    <property type="entry name" value="CYTOPLASMIC TRNA 2-THIOLATION PROTEIN 2"/>
    <property type="match status" value="1"/>
</dbReference>
<dbReference type="Pfam" id="PF10288">
    <property type="entry name" value="CTU2"/>
    <property type="match status" value="1"/>
</dbReference>
<dbReference type="SUPFAM" id="SSF52402">
    <property type="entry name" value="Adenine nucleotide alpha hydrolases-like"/>
    <property type="match status" value="1"/>
</dbReference>
<gene>
    <name type="primary">Ctu2</name>
    <name type="synonym">Ncs2</name>
</gene>
<keyword id="KW-0007">Acetylation</keyword>
<keyword id="KW-0963">Cytoplasm</keyword>
<keyword id="KW-0597">Phosphoprotein</keyword>
<keyword id="KW-1185">Reference proteome</keyword>
<keyword id="KW-0819">tRNA processing</keyword>
<proteinExistence type="evidence at protein level"/>
<evidence type="ECO:0000250" key="1">
    <source>
        <dbReference type="UniProtKB" id="Q2VPK5"/>
    </source>
</evidence>
<evidence type="ECO:0000255" key="2">
    <source>
        <dbReference type="HAMAP-Rule" id="MF_03054"/>
    </source>
</evidence>
<evidence type="ECO:0000256" key="3">
    <source>
        <dbReference type="SAM" id="MobiDB-lite"/>
    </source>
</evidence>
<evidence type="ECO:0000305" key="4"/>
<feature type="initiator methionine" description="Removed" evidence="1">
    <location>
        <position position="1"/>
    </location>
</feature>
<feature type="chain" id="PRO_0000289176" description="Cytoplasmic tRNA 2-thiolation protein 2">
    <location>
        <begin position="2"/>
        <end position="514"/>
    </location>
</feature>
<feature type="region of interest" description="Disordered" evidence="3">
    <location>
        <begin position="1"/>
        <end position="23"/>
    </location>
</feature>
<feature type="region of interest" description="Disordered" evidence="3">
    <location>
        <begin position="192"/>
        <end position="222"/>
    </location>
</feature>
<feature type="compositionally biased region" description="Basic and acidic residues" evidence="3">
    <location>
        <begin position="12"/>
        <end position="23"/>
    </location>
</feature>
<feature type="compositionally biased region" description="Basic and acidic residues" evidence="3">
    <location>
        <begin position="206"/>
        <end position="215"/>
    </location>
</feature>
<feature type="modified residue" description="N-acetylcysteine" evidence="1">
    <location>
        <position position="2"/>
    </location>
</feature>
<feature type="modified residue" description="Phosphoserine" evidence="1">
    <location>
        <position position="421"/>
    </location>
</feature>
<feature type="modified residue" description="Phosphoserine" evidence="1">
    <location>
        <position position="425"/>
    </location>
</feature>
<sequence length="514" mass="56105">MCQAGEDYAGPARREPPPVPRPSREQKCVKCAEGLPVVVIRAGDAFCRVCFKAFYVHKFRAMLGKNRVIFPGEKVLLSWSGGPSSSSMVWQVLEGLSQDSAKRLRFVPGVIYVDEGAACGQSLEDRQKTVAEVKRILENTGFPWHVVALEEVFSLPPSVLCCTSQESAGTEEAYKAAVDRFLQQQQQQQQRVLGAEAGASPAQGEARLHPSHGREPSGTAGYPTAAQTEALSRLFSSIKTLTAKEELLQTLRTHLIVHIARVHGYCKVMTGETCTRLAIKLMTNLALGRGAFLAWDTGFSDERHGDVVLVRPMRDHTLKEVAFYNHLFRVPSVFTPAIDTKAPEKASIHRLMEAFILRLQTLFPSTVSTVYRTSEKLVKAPREGCAAGPSGPSCLLCMCALDIDTADSATAFGAQSSSHLSQMPSAEAGMPTQPCCAAGEGQAQSCHREVGKRGDARACITEQLCYSCRVNMKDLPSLDPLPPYVLAEAQLRSQRGSVSEEIQEYLITDEEEDS</sequence>